<reference key="1">
    <citation type="journal article" date="1997" name="Science">
        <title>The complete genome sequence of Escherichia coli K-12.</title>
        <authorList>
            <person name="Blattner F.R."/>
            <person name="Plunkett G. III"/>
            <person name="Bloch C.A."/>
            <person name="Perna N.T."/>
            <person name="Burland V."/>
            <person name="Riley M."/>
            <person name="Collado-Vides J."/>
            <person name="Glasner J.D."/>
            <person name="Rode C.K."/>
            <person name="Mayhew G.F."/>
            <person name="Gregor J."/>
            <person name="Davis N.W."/>
            <person name="Kirkpatrick H.A."/>
            <person name="Goeden M.A."/>
            <person name="Rose D.J."/>
            <person name="Mau B."/>
            <person name="Shao Y."/>
        </authorList>
    </citation>
    <scope>NUCLEOTIDE SEQUENCE [LARGE SCALE GENOMIC DNA]</scope>
    <source>
        <strain>K12 / MG1655 / ATCC 47076</strain>
    </source>
</reference>
<reference key="2">
    <citation type="journal article" date="2006" name="Mol. Syst. Biol.">
        <title>Highly accurate genome sequences of Escherichia coli K-12 strains MG1655 and W3110.</title>
        <authorList>
            <person name="Hayashi K."/>
            <person name="Morooka N."/>
            <person name="Yamamoto Y."/>
            <person name="Fujita K."/>
            <person name="Isono K."/>
            <person name="Choi S."/>
            <person name="Ohtsubo E."/>
            <person name="Baba T."/>
            <person name="Wanner B.L."/>
            <person name="Mori H."/>
            <person name="Horiuchi T."/>
        </authorList>
    </citation>
    <scope>NUCLEOTIDE SEQUENCE [LARGE SCALE GENOMIC DNA]</scope>
    <source>
        <strain>K12 / W3110 / ATCC 27325 / DSM 5911</strain>
    </source>
</reference>
<reference key="3">
    <citation type="journal article" date="2019" name="MBio">
        <title>Ubiquinone biosynthesis over the entire O2 range: characterization of a conserved O2-independent pathway.</title>
        <authorList>
            <person name="Pelosi L."/>
            <person name="Vo C.D."/>
            <person name="Abby S.S."/>
            <person name="Loiseau L."/>
            <person name="Rascalou B."/>
            <person name="Hajj Chehade M."/>
            <person name="Faivre B."/>
            <person name="Gousse M."/>
            <person name="Chenal C."/>
            <person name="Touati N."/>
            <person name="Binet L."/>
            <person name="Cornu D."/>
            <person name="Fyfe C.D."/>
            <person name="Fontecave M."/>
            <person name="Barras F."/>
            <person name="Lombard M."/>
            <person name="Pierrel F."/>
        </authorList>
    </citation>
    <scope>FUNCTION</scope>
    <scope>COFACTOR</scope>
    <scope>PATHWAY</scope>
    <scope>SUBUNIT</scope>
    <scope>DISRUPTION PHENOTYPE</scope>
    <scope>MUTAGENESIS OF CYS-169; CYS-176; CYS-193 AND CYS-232</scope>
    <source>
        <strain>K12 / MG1655 / ATCC 47076</strain>
    </source>
</reference>
<comment type="function">
    <text evidence="1 2">Required for O(2)-independent ubiquinone (coenzyme Q) biosynthesis. Together with UbiV, is essential for the C6-hydroxylation reaction in the oxygen-independent ubiquinone biosynthesis pathway.</text>
</comment>
<comment type="cofactor">
    <cofactor evidence="1 2">
        <name>[4Fe-4S] cluster</name>
        <dbReference type="ChEBI" id="CHEBI:49883"/>
    </cofactor>
</comment>
<comment type="pathway">
    <text evidence="1 2">Cofactor biosynthesis; ubiquinone biosynthesis.</text>
</comment>
<comment type="subunit">
    <text evidence="1 2">Forms a heterodimer with UbiV.</text>
</comment>
<comment type="interaction">
    <interactant intactId="EBI-561157">
        <id>P45527</id>
    </interactant>
    <interactant intactId="EBI-543750">
        <id>P0A6F5</id>
        <label>groEL</label>
    </interactant>
    <organismsDiffer>false</organismsDiffer>
    <experiments>4</experiments>
</comment>
<comment type="disruption phenotype">
    <text evidence="2">Deletion mutant is unable to synthesize ubiquinone under strict anaerobic conditions. Mutant shows normal levels of ubiquinone after aerobic growth.</text>
</comment>
<comment type="similarity">
    <text evidence="1 4">Belongs to the peptidase U32 family. UbiU subfamily.</text>
</comment>
<protein>
    <recommendedName>
        <fullName evidence="1 4">Ubiquinone biosynthesis protein UbiU</fullName>
    </recommendedName>
</protein>
<sequence length="331" mass="37047">MELLCPAGNLPALKAAIENGADAVYIGLKDDTNARHFAGLNFTEKKLQEAVSFVHQHRRKLHIAINTFAHPDGYARWQRAVDMAAQLGADALILADLAMLEYAAERYPHIERHVSVQASATNEEAINFYHRHFDVARVVLPRVLSIHQVKQLARVTPVPLEVFAFGSLCIMSEGRCYLSSYLTGESPNTIGACSPARFVRWQQTPQGLESRLNEVLIDRYQDGENAGYPTLCKGRYLVDGERYHALEEPTSLNTLELLPELMAANIASVKIEGRQRSPAYVSQVAKVWRQAIDRCKADPQNFVPQSAWMETLGSMSEGTQTTLGAYHRKWQ</sequence>
<evidence type="ECO:0000255" key="1">
    <source>
        <dbReference type="HAMAP-Rule" id="MF_02232"/>
    </source>
</evidence>
<evidence type="ECO:0000269" key="2">
    <source>
    </source>
</evidence>
<evidence type="ECO:0000303" key="3">
    <source>
    </source>
</evidence>
<evidence type="ECO:0000305" key="4"/>
<gene>
    <name evidence="1 3" type="primary">ubiU</name>
    <name type="synonym">yhbU</name>
    <name type="ordered locus">b3158</name>
    <name type="ordered locus">JW3127</name>
</gene>
<name>UBIU_ECOLI</name>
<keyword id="KW-0004">4Fe-4S</keyword>
<keyword id="KW-0408">Iron</keyword>
<keyword id="KW-0411">Iron-sulfur</keyword>
<keyword id="KW-0479">Metal-binding</keyword>
<keyword id="KW-1185">Reference proteome</keyword>
<keyword id="KW-0831">Ubiquinone biosynthesis</keyword>
<accession>P45527</accession>
<accession>Q2M952</accession>
<organism>
    <name type="scientific">Escherichia coli (strain K12)</name>
    <dbReference type="NCBI Taxonomy" id="83333"/>
    <lineage>
        <taxon>Bacteria</taxon>
        <taxon>Pseudomonadati</taxon>
        <taxon>Pseudomonadota</taxon>
        <taxon>Gammaproteobacteria</taxon>
        <taxon>Enterobacterales</taxon>
        <taxon>Enterobacteriaceae</taxon>
        <taxon>Escherichia</taxon>
    </lineage>
</organism>
<dbReference type="EMBL" id="U18997">
    <property type="protein sequence ID" value="AAA57961.1"/>
    <property type="molecule type" value="Genomic_DNA"/>
</dbReference>
<dbReference type="EMBL" id="U00096">
    <property type="protein sequence ID" value="AAC76192.1"/>
    <property type="molecule type" value="Genomic_DNA"/>
</dbReference>
<dbReference type="EMBL" id="AP009048">
    <property type="protein sequence ID" value="BAE77204.1"/>
    <property type="molecule type" value="Genomic_DNA"/>
</dbReference>
<dbReference type="PIR" id="B65106">
    <property type="entry name" value="B65106"/>
</dbReference>
<dbReference type="RefSeq" id="NP_417627.1">
    <property type="nucleotide sequence ID" value="NC_000913.3"/>
</dbReference>
<dbReference type="RefSeq" id="WP_001311152.1">
    <property type="nucleotide sequence ID" value="NZ_LN832404.1"/>
</dbReference>
<dbReference type="SMR" id="P45527"/>
<dbReference type="BioGRID" id="4259275">
    <property type="interactions" value="103"/>
</dbReference>
<dbReference type="DIP" id="DIP-12268N"/>
<dbReference type="FunCoup" id="P45527">
    <property type="interactions" value="91"/>
</dbReference>
<dbReference type="IntAct" id="P45527">
    <property type="interactions" value="12"/>
</dbReference>
<dbReference type="STRING" id="511145.b3158"/>
<dbReference type="jPOST" id="P45527"/>
<dbReference type="PaxDb" id="511145-b3158"/>
<dbReference type="EnsemblBacteria" id="AAC76192">
    <property type="protein sequence ID" value="AAC76192"/>
    <property type="gene ID" value="b3158"/>
</dbReference>
<dbReference type="GeneID" id="949115"/>
<dbReference type="KEGG" id="ecj:JW3127"/>
<dbReference type="KEGG" id="eco:b3158"/>
<dbReference type="KEGG" id="ecoc:C3026_17200"/>
<dbReference type="PATRIC" id="fig|1411691.4.peg.3572"/>
<dbReference type="EchoBASE" id="EB2642"/>
<dbReference type="eggNOG" id="COG0826">
    <property type="taxonomic scope" value="Bacteria"/>
</dbReference>
<dbReference type="HOGENOM" id="CLU_011540_3_2_6"/>
<dbReference type="InParanoid" id="P45527"/>
<dbReference type="OMA" id="KIHVALN"/>
<dbReference type="OrthoDB" id="9807498at2"/>
<dbReference type="PhylomeDB" id="P45527"/>
<dbReference type="BioCyc" id="EcoCyc:G7652-MONOMER"/>
<dbReference type="UniPathway" id="UPA00232"/>
<dbReference type="PRO" id="PR:P45527"/>
<dbReference type="Proteomes" id="UP000000625">
    <property type="component" value="Chromosome"/>
</dbReference>
<dbReference type="GO" id="GO:0051539">
    <property type="term" value="F:4 iron, 4 sulfur cluster binding"/>
    <property type="evidence" value="ECO:0000314"/>
    <property type="project" value="EcoCyc"/>
</dbReference>
<dbReference type="GO" id="GO:0046872">
    <property type="term" value="F:metal ion binding"/>
    <property type="evidence" value="ECO:0007669"/>
    <property type="project" value="UniProtKB-KW"/>
</dbReference>
<dbReference type="GO" id="GO:0006744">
    <property type="term" value="P:ubiquinone biosynthetic process"/>
    <property type="evidence" value="ECO:0007669"/>
    <property type="project" value="UniProtKB-UniRule"/>
</dbReference>
<dbReference type="HAMAP" id="MF_02232">
    <property type="entry name" value="UbiU"/>
    <property type="match status" value="1"/>
</dbReference>
<dbReference type="InterPro" id="IPR001539">
    <property type="entry name" value="Peptidase_U32"/>
</dbReference>
<dbReference type="InterPro" id="IPR051454">
    <property type="entry name" value="RNA/ubiquinone_mod_enzymes"/>
</dbReference>
<dbReference type="InterPro" id="IPR036206">
    <property type="entry name" value="ThiamineP_synth_sf"/>
</dbReference>
<dbReference type="InterPro" id="IPR043692">
    <property type="entry name" value="UbiU"/>
</dbReference>
<dbReference type="PANTHER" id="PTHR30217">
    <property type="entry name" value="PEPTIDASE U32 FAMILY"/>
    <property type="match status" value="1"/>
</dbReference>
<dbReference type="PANTHER" id="PTHR30217:SF3">
    <property type="entry name" value="UBIQUINONE BIOSYNTHESIS PROTEIN UBIU"/>
    <property type="match status" value="1"/>
</dbReference>
<dbReference type="Pfam" id="PF01136">
    <property type="entry name" value="Peptidase_U32"/>
    <property type="match status" value="1"/>
</dbReference>
<dbReference type="SUPFAM" id="SSF51391">
    <property type="entry name" value="Thiamin phosphate synthase"/>
    <property type="match status" value="1"/>
</dbReference>
<dbReference type="PROSITE" id="PS01276">
    <property type="entry name" value="PEPTIDASE_U32"/>
    <property type="match status" value="1"/>
</dbReference>
<feature type="chain" id="PRO_0000028525" description="Ubiquinone biosynthesis protein UbiU">
    <location>
        <begin position="1"/>
        <end position="331"/>
    </location>
</feature>
<feature type="binding site" evidence="1 2">
    <location>
        <position position="169"/>
    </location>
    <ligand>
        <name>[4Fe-4S] cluster</name>
        <dbReference type="ChEBI" id="CHEBI:49883"/>
    </ligand>
</feature>
<feature type="binding site" evidence="1 2">
    <location>
        <position position="176"/>
    </location>
    <ligand>
        <name>[4Fe-4S] cluster</name>
        <dbReference type="ChEBI" id="CHEBI:49883"/>
    </ligand>
</feature>
<feature type="binding site" evidence="1 2">
    <location>
        <position position="193"/>
    </location>
    <ligand>
        <name>[4Fe-4S] cluster</name>
        <dbReference type="ChEBI" id="CHEBI:49883"/>
    </ligand>
</feature>
<feature type="binding site" evidence="1 2">
    <location>
        <position position="232"/>
    </location>
    <ligand>
        <name>[4Fe-4S] cluster</name>
        <dbReference type="ChEBI" id="CHEBI:49883"/>
    </ligand>
</feature>
<feature type="mutagenesis site" description="Decreases iron-sulfur binding; when associated with A-176." evidence="2">
    <original>C</original>
    <variation>A</variation>
    <location>
        <position position="169"/>
    </location>
</feature>
<feature type="mutagenesis site" description="Alters ubiquinone synthesis in anaerobic conditions. Decreases iron-sulfur binding; when associated with A-169." evidence="2">
    <original>C</original>
    <variation>A</variation>
    <location>
        <position position="176"/>
    </location>
</feature>
<feature type="mutagenesis site" description="Decreases iron-sulfur binding; when associated with A-232." evidence="2">
    <original>C</original>
    <variation>A</variation>
    <location>
        <position position="193"/>
    </location>
</feature>
<feature type="mutagenesis site" description="Decreases iron-sulfur binding; when associated with A-193." evidence="2">
    <original>C</original>
    <variation>A</variation>
    <location>
        <position position="232"/>
    </location>
</feature>
<proteinExistence type="evidence at protein level"/>